<name>RL23_SYNPW</name>
<proteinExistence type="inferred from homology"/>
<accession>A5GIU3</accession>
<dbReference type="EMBL" id="CT971583">
    <property type="protein sequence ID" value="CAK22858.1"/>
    <property type="molecule type" value="Genomic_DNA"/>
</dbReference>
<dbReference type="SMR" id="A5GIU3"/>
<dbReference type="STRING" id="32051.SynWH7803_0432"/>
<dbReference type="KEGG" id="syx:SynWH7803_0432"/>
<dbReference type="eggNOG" id="COG0089">
    <property type="taxonomic scope" value="Bacteria"/>
</dbReference>
<dbReference type="HOGENOM" id="CLU_037562_3_2_3"/>
<dbReference type="OrthoDB" id="9793353at2"/>
<dbReference type="Proteomes" id="UP000001566">
    <property type="component" value="Chromosome"/>
</dbReference>
<dbReference type="GO" id="GO:1990904">
    <property type="term" value="C:ribonucleoprotein complex"/>
    <property type="evidence" value="ECO:0007669"/>
    <property type="project" value="UniProtKB-KW"/>
</dbReference>
<dbReference type="GO" id="GO:0005840">
    <property type="term" value="C:ribosome"/>
    <property type="evidence" value="ECO:0007669"/>
    <property type="project" value="UniProtKB-KW"/>
</dbReference>
<dbReference type="GO" id="GO:0019843">
    <property type="term" value="F:rRNA binding"/>
    <property type="evidence" value="ECO:0007669"/>
    <property type="project" value="UniProtKB-UniRule"/>
</dbReference>
<dbReference type="GO" id="GO:0003735">
    <property type="term" value="F:structural constituent of ribosome"/>
    <property type="evidence" value="ECO:0007669"/>
    <property type="project" value="InterPro"/>
</dbReference>
<dbReference type="GO" id="GO:0006412">
    <property type="term" value="P:translation"/>
    <property type="evidence" value="ECO:0007669"/>
    <property type="project" value="UniProtKB-UniRule"/>
</dbReference>
<dbReference type="FunFam" id="3.30.70.330:FF:000001">
    <property type="entry name" value="50S ribosomal protein L23"/>
    <property type="match status" value="1"/>
</dbReference>
<dbReference type="Gene3D" id="3.30.70.330">
    <property type="match status" value="1"/>
</dbReference>
<dbReference type="HAMAP" id="MF_01369_B">
    <property type="entry name" value="Ribosomal_uL23_B"/>
    <property type="match status" value="1"/>
</dbReference>
<dbReference type="InterPro" id="IPR012677">
    <property type="entry name" value="Nucleotide-bd_a/b_plait_sf"/>
</dbReference>
<dbReference type="InterPro" id="IPR013025">
    <property type="entry name" value="Ribosomal_uL23-like"/>
</dbReference>
<dbReference type="InterPro" id="IPR012678">
    <property type="entry name" value="Ribosomal_uL23/eL15/eS24_sf"/>
</dbReference>
<dbReference type="InterPro" id="IPR001014">
    <property type="entry name" value="Ribosomal_uL23_CS"/>
</dbReference>
<dbReference type="NCBIfam" id="NF004363">
    <property type="entry name" value="PRK05738.2-4"/>
    <property type="match status" value="1"/>
</dbReference>
<dbReference type="NCBIfam" id="NF004365">
    <property type="entry name" value="PRK05738.3-1"/>
    <property type="match status" value="1"/>
</dbReference>
<dbReference type="NCBIfam" id="NF004366">
    <property type="entry name" value="PRK05738.3-2"/>
    <property type="match status" value="1"/>
</dbReference>
<dbReference type="NCBIfam" id="NF004368">
    <property type="entry name" value="PRK05738.3-4"/>
    <property type="match status" value="1"/>
</dbReference>
<dbReference type="PANTHER" id="PTHR11620">
    <property type="entry name" value="60S RIBOSOMAL PROTEIN L23A"/>
    <property type="match status" value="1"/>
</dbReference>
<dbReference type="Pfam" id="PF00276">
    <property type="entry name" value="Ribosomal_L23"/>
    <property type="match status" value="1"/>
</dbReference>
<dbReference type="SUPFAM" id="SSF54189">
    <property type="entry name" value="Ribosomal proteins S24e, L23 and L15e"/>
    <property type="match status" value="1"/>
</dbReference>
<dbReference type="PROSITE" id="PS00050">
    <property type="entry name" value="RIBOSOMAL_L23"/>
    <property type="match status" value="1"/>
</dbReference>
<comment type="function">
    <text evidence="1">One of the early assembly proteins it binds 23S rRNA. One of the proteins that surrounds the polypeptide exit tunnel on the outside of the ribosome. Forms the main docking site for trigger factor binding to the ribosome.</text>
</comment>
<comment type="subunit">
    <text evidence="1">Part of the 50S ribosomal subunit. Contacts protein L29, and trigger factor when it is bound to the ribosome.</text>
</comment>
<comment type="similarity">
    <text evidence="1">Belongs to the universal ribosomal protein uL23 family.</text>
</comment>
<organism>
    <name type="scientific">Synechococcus sp. (strain WH7803)</name>
    <dbReference type="NCBI Taxonomy" id="32051"/>
    <lineage>
        <taxon>Bacteria</taxon>
        <taxon>Bacillati</taxon>
        <taxon>Cyanobacteriota</taxon>
        <taxon>Cyanophyceae</taxon>
        <taxon>Synechococcales</taxon>
        <taxon>Synechococcaceae</taxon>
        <taxon>Synechococcus</taxon>
    </lineage>
</organism>
<gene>
    <name evidence="1" type="primary">rplW</name>
    <name evidence="1" type="synonym">rpl23</name>
    <name type="ordered locus">SynWH7803_0432</name>
</gene>
<feature type="chain" id="PRO_1000068178" description="Large ribosomal subunit protein uL23">
    <location>
        <begin position="1"/>
        <end position="100"/>
    </location>
</feature>
<evidence type="ECO:0000255" key="1">
    <source>
        <dbReference type="HAMAP-Rule" id="MF_01369"/>
    </source>
</evidence>
<evidence type="ECO:0000305" key="2"/>
<keyword id="KW-1185">Reference proteome</keyword>
<keyword id="KW-0687">Ribonucleoprotein</keyword>
<keyword id="KW-0689">Ribosomal protein</keyword>
<keyword id="KW-0694">RNA-binding</keyword>
<keyword id="KW-0699">rRNA-binding</keyword>
<protein>
    <recommendedName>
        <fullName evidence="1">Large ribosomal subunit protein uL23</fullName>
    </recommendedName>
    <alternativeName>
        <fullName evidence="2">50S ribosomal protein L23</fullName>
    </alternativeName>
</protein>
<reference key="1">
    <citation type="submission" date="2006-05" db="EMBL/GenBank/DDBJ databases">
        <authorList>
            <consortium name="Genoscope"/>
        </authorList>
    </citation>
    <scope>NUCLEOTIDE SEQUENCE [LARGE SCALE GENOMIC DNA]</scope>
    <source>
        <strain>WH7803</strain>
    </source>
</reference>
<sequence length="100" mass="11295">MTERFTGRLADVIRRPLITEKATRALELNQYTFEVDHRAAKPDIKAAVEQLFDVKVTGISTMNPPRRSRRVGRFAGKRAQVKKAVVRLAEGSSIQLFPES</sequence>